<name>IHFA_COXBR</name>
<protein>
    <recommendedName>
        <fullName evidence="1">Integration host factor subunit alpha</fullName>
        <shortName evidence="1">IHF-alpha</shortName>
    </recommendedName>
</protein>
<evidence type="ECO:0000255" key="1">
    <source>
        <dbReference type="HAMAP-Rule" id="MF_00380"/>
    </source>
</evidence>
<evidence type="ECO:0000256" key="2">
    <source>
        <dbReference type="SAM" id="MobiDB-lite"/>
    </source>
</evidence>
<reference key="1">
    <citation type="submission" date="2007-11" db="EMBL/GenBank/DDBJ databases">
        <title>Genome sequencing of phylogenetically and phenotypically diverse Coxiella burnetii isolates.</title>
        <authorList>
            <person name="Seshadri R."/>
            <person name="Samuel J.E."/>
        </authorList>
    </citation>
    <scope>NUCLEOTIDE SEQUENCE [LARGE SCALE GENOMIC DNA]</scope>
    <source>
        <strain>RSA 331 / Henzerling II</strain>
    </source>
</reference>
<gene>
    <name evidence="1" type="primary">ihfA</name>
    <name evidence="1" type="synonym">himA</name>
    <name type="ordered locus">COXBURSA331_A1472</name>
</gene>
<accession>A9N8J9</accession>
<feature type="chain" id="PRO_1000080028" description="Integration host factor subunit alpha">
    <location>
        <begin position="1"/>
        <end position="103"/>
    </location>
</feature>
<feature type="region of interest" description="Disordered" evidence="2">
    <location>
        <begin position="50"/>
        <end position="72"/>
    </location>
</feature>
<feature type="compositionally biased region" description="Basic and acidic residues" evidence="2">
    <location>
        <begin position="54"/>
        <end position="69"/>
    </location>
</feature>
<keyword id="KW-0233">DNA recombination</keyword>
<keyword id="KW-0238">DNA-binding</keyword>
<keyword id="KW-0804">Transcription</keyword>
<keyword id="KW-0805">Transcription regulation</keyword>
<keyword id="KW-0810">Translation regulation</keyword>
<proteinExistence type="inferred from homology"/>
<comment type="function">
    <text evidence="1">This protein is one of the two subunits of integration host factor, a specific DNA-binding protein that functions in genetic recombination as well as in transcriptional and translational control.</text>
</comment>
<comment type="subunit">
    <text evidence="1">Heterodimer of an alpha and a beta chain.</text>
</comment>
<comment type="similarity">
    <text evidence="1">Belongs to the bacterial histone-like protein family.</text>
</comment>
<organism>
    <name type="scientific">Coxiella burnetii (strain RSA 331 / Henzerling II)</name>
    <dbReference type="NCBI Taxonomy" id="360115"/>
    <lineage>
        <taxon>Bacteria</taxon>
        <taxon>Pseudomonadati</taxon>
        <taxon>Pseudomonadota</taxon>
        <taxon>Gammaproteobacteria</taxon>
        <taxon>Legionellales</taxon>
        <taxon>Coxiellaceae</taxon>
        <taxon>Coxiella</taxon>
    </lineage>
</organism>
<dbReference type="EMBL" id="CP000890">
    <property type="protein sequence ID" value="ABX78771.1"/>
    <property type="molecule type" value="Genomic_DNA"/>
</dbReference>
<dbReference type="RefSeq" id="WP_005770927.1">
    <property type="nucleotide sequence ID" value="NC_010117.1"/>
</dbReference>
<dbReference type="SMR" id="A9N8J9"/>
<dbReference type="KEGG" id="cbs:COXBURSA331_A1472"/>
<dbReference type="HOGENOM" id="CLU_105066_1_3_6"/>
<dbReference type="GO" id="GO:0005829">
    <property type="term" value="C:cytosol"/>
    <property type="evidence" value="ECO:0007669"/>
    <property type="project" value="TreeGrafter"/>
</dbReference>
<dbReference type="GO" id="GO:0003677">
    <property type="term" value="F:DNA binding"/>
    <property type="evidence" value="ECO:0007669"/>
    <property type="project" value="UniProtKB-UniRule"/>
</dbReference>
<dbReference type="GO" id="GO:0030527">
    <property type="term" value="F:structural constituent of chromatin"/>
    <property type="evidence" value="ECO:0007669"/>
    <property type="project" value="InterPro"/>
</dbReference>
<dbReference type="GO" id="GO:0006310">
    <property type="term" value="P:DNA recombination"/>
    <property type="evidence" value="ECO:0007669"/>
    <property type="project" value="UniProtKB-UniRule"/>
</dbReference>
<dbReference type="GO" id="GO:0009893">
    <property type="term" value="P:positive regulation of metabolic process"/>
    <property type="evidence" value="ECO:0007669"/>
    <property type="project" value="UniProtKB-ARBA"/>
</dbReference>
<dbReference type="GO" id="GO:0006355">
    <property type="term" value="P:regulation of DNA-templated transcription"/>
    <property type="evidence" value="ECO:0007669"/>
    <property type="project" value="UniProtKB-UniRule"/>
</dbReference>
<dbReference type="GO" id="GO:0006417">
    <property type="term" value="P:regulation of translation"/>
    <property type="evidence" value="ECO:0007669"/>
    <property type="project" value="UniProtKB-UniRule"/>
</dbReference>
<dbReference type="CDD" id="cd13835">
    <property type="entry name" value="IHF_A"/>
    <property type="match status" value="1"/>
</dbReference>
<dbReference type="FunFam" id="4.10.520.10:FF:000002">
    <property type="entry name" value="Integration host factor subunit alpha"/>
    <property type="match status" value="1"/>
</dbReference>
<dbReference type="Gene3D" id="4.10.520.10">
    <property type="entry name" value="IHF-like DNA-binding proteins"/>
    <property type="match status" value="1"/>
</dbReference>
<dbReference type="HAMAP" id="MF_00380">
    <property type="entry name" value="IHF_alpha"/>
    <property type="match status" value="1"/>
</dbReference>
<dbReference type="InterPro" id="IPR000119">
    <property type="entry name" value="Hist_DNA-bd"/>
</dbReference>
<dbReference type="InterPro" id="IPR020816">
    <property type="entry name" value="Histone-like_DNA-bd_CS"/>
</dbReference>
<dbReference type="InterPro" id="IPR010992">
    <property type="entry name" value="IHF-like_DNA-bd_dom_sf"/>
</dbReference>
<dbReference type="InterPro" id="IPR005684">
    <property type="entry name" value="IHF_alpha"/>
</dbReference>
<dbReference type="NCBIfam" id="TIGR00987">
    <property type="entry name" value="himA"/>
    <property type="match status" value="1"/>
</dbReference>
<dbReference type="NCBIfam" id="NF001401">
    <property type="entry name" value="PRK00285.1"/>
    <property type="match status" value="1"/>
</dbReference>
<dbReference type="PANTHER" id="PTHR33175">
    <property type="entry name" value="DNA-BINDING PROTEIN HU"/>
    <property type="match status" value="1"/>
</dbReference>
<dbReference type="PANTHER" id="PTHR33175:SF2">
    <property type="entry name" value="INTEGRATION HOST FACTOR SUBUNIT ALPHA"/>
    <property type="match status" value="1"/>
</dbReference>
<dbReference type="Pfam" id="PF00216">
    <property type="entry name" value="Bac_DNA_binding"/>
    <property type="match status" value="1"/>
</dbReference>
<dbReference type="PRINTS" id="PR01727">
    <property type="entry name" value="DNABINDINGHU"/>
</dbReference>
<dbReference type="SMART" id="SM00411">
    <property type="entry name" value="BHL"/>
    <property type="match status" value="1"/>
</dbReference>
<dbReference type="SUPFAM" id="SSF47729">
    <property type="entry name" value="IHF-like DNA-binding proteins"/>
    <property type="match status" value="1"/>
</dbReference>
<dbReference type="PROSITE" id="PS00045">
    <property type="entry name" value="HISTONE_LIKE"/>
    <property type="match status" value="1"/>
</dbReference>
<sequence length="103" mass="11617">MALTKADLSEHLFNVVGLNKREAKDLVELFFKEISLSLERGEPVKLSGFGNFNLRDKGERPGRNPKTGEEIPITARRVVTFRAGHKLKSRVEKNVKPKEEGES</sequence>